<feature type="chain" id="PRO_0000102171" description="Transcription-repair-coupling factor">
    <location>
        <begin position="1"/>
        <end position="1234"/>
    </location>
</feature>
<feature type="domain" description="Helicase ATP-binding" evidence="1">
    <location>
        <begin position="663"/>
        <end position="824"/>
    </location>
</feature>
<feature type="domain" description="Helicase C-terminal" evidence="1">
    <location>
        <begin position="842"/>
        <end position="999"/>
    </location>
</feature>
<feature type="region of interest" description="Disordered" evidence="2">
    <location>
        <begin position="1207"/>
        <end position="1234"/>
    </location>
</feature>
<feature type="short sequence motif" description="DEEQ box">
    <location>
        <begin position="777"/>
        <end position="780"/>
    </location>
</feature>
<feature type="compositionally biased region" description="Basic and acidic residues" evidence="2">
    <location>
        <begin position="1220"/>
        <end position="1234"/>
    </location>
</feature>
<feature type="binding site" evidence="1">
    <location>
        <begin position="676"/>
        <end position="683"/>
    </location>
    <ligand>
        <name>ATP</name>
        <dbReference type="ChEBI" id="CHEBI:30616"/>
    </ligand>
</feature>
<name>MFD_MYCBO</name>
<proteinExistence type="inferred from homology"/>
<accession>P64327</accession>
<accession>A0A1R3XX47</accession>
<accession>P96380</accession>
<accession>X2BGR0</accession>
<protein>
    <recommendedName>
        <fullName evidence="1">Transcription-repair-coupling factor</fullName>
        <shortName evidence="1">TRCF</shortName>
        <ecNumber evidence="1">3.6.4.-</ecNumber>
    </recommendedName>
</protein>
<gene>
    <name evidence="1" type="primary">mfd</name>
    <name type="ordered locus">BQ2027_MB1048</name>
</gene>
<comment type="function">
    <text evidence="1">Couples transcription and DNA repair by recognizing RNA polymerase (RNAP) stalled at DNA lesions. Mediates ATP-dependent release of RNAP and its truncated transcript from the DNA, and recruitment of nucleotide excision repair machinery to the damaged site.</text>
</comment>
<comment type="subcellular location">
    <subcellularLocation>
        <location evidence="1">Cytoplasm</location>
    </subcellularLocation>
</comment>
<comment type="similarity">
    <text evidence="1">In the N-terminal section; belongs to the UvrB family.</text>
</comment>
<comment type="similarity">
    <text evidence="1">In the C-terminal section; belongs to the helicase family. RecG subfamily.</text>
</comment>
<dbReference type="EC" id="3.6.4.-" evidence="1"/>
<dbReference type="EMBL" id="LT708304">
    <property type="protein sequence ID" value="SIT99647.1"/>
    <property type="molecule type" value="Genomic_DNA"/>
</dbReference>
<dbReference type="RefSeq" id="NP_854704.1">
    <property type="nucleotide sequence ID" value="NC_002945.3"/>
</dbReference>
<dbReference type="RefSeq" id="WP_003405273.1">
    <property type="nucleotide sequence ID" value="NC_002945.4"/>
</dbReference>
<dbReference type="SMR" id="P64327"/>
<dbReference type="KEGG" id="mbo:BQ2027_MB1048"/>
<dbReference type="PATRIC" id="fig|233413.5.peg.1139"/>
<dbReference type="Proteomes" id="UP000001419">
    <property type="component" value="Chromosome"/>
</dbReference>
<dbReference type="GO" id="GO:0005737">
    <property type="term" value="C:cytoplasm"/>
    <property type="evidence" value="ECO:0007669"/>
    <property type="project" value="UniProtKB-SubCell"/>
</dbReference>
<dbReference type="GO" id="GO:0005524">
    <property type="term" value="F:ATP binding"/>
    <property type="evidence" value="ECO:0007669"/>
    <property type="project" value="UniProtKB-UniRule"/>
</dbReference>
<dbReference type="GO" id="GO:0003684">
    <property type="term" value="F:damaged DNA binding"/>
    <property type="evidence" value="ECO:0007669"/>
    <property type="project" value="InterPro"/>
</dbReference>
<dbReference type="GO" id="GO:0003678">
    <property type="term" value="F:DNA helicase activity"/>
    <property type="evidence" value="ECO:0007669"/>
    <property type="project" value="TreeGrafter"/>
</dbReference>
<dbReference type="GO" id="GO:0016787">
    <property type="term" value="F:hydrolase activity"/>
    <property type="evidence" value="ECO:0007669"/>
    <property type="project" value="UniProtKB-KW"/>
</dbReference>
<dbReference type="GO" id="GO:0006355">
    <property type="term" value="P:regulation of DNA-templated transcription"/>
    <property type="evidence" value="ECO:0007669"/>
    <property type="project" value="UniProtKB-UniRule"/>
</dbReference>
<dbReference type="GO" id="GO:0000716">
    <property type="term" value="P:transcription-coupled nucleotide-excision repair, DNA damage recognition"/>
    <property type="evidence" value="ECO:0007669"/>
    <property type="project" value="UniProtKB-UniRule"/>
</dbReference>
<dbReference type="CDD" id="cd17991">
    <property type="entry name" value="DEXHc_TRCF"/>
    <property type="match status" value="1"/>
</dbReference>
<dbReference type="CDD" id="cd18810">
    <property type="entry name" value="SF2_C_TRCF"/>
    <property type="match status" value="1"/>
</dbReference>
<dbReference type="FunFam" id="3.30.2060.10:FF:000004">
    <property type="entry name" value="Transcription-repair-coupling factor"/>
    <property type="match status" value="1"/>
</dbReference>
<dbReference type="FunFam" id="3.40.50.300:FF:000300">
    <property type="entry name" value="Transcription-repair-coupling factor"/>
    <property type="match status" value="1"/>
</dbReference>
<dbReference type="FunFam" id="3.40.50.300:FF:000546">
    <property type="entry name" value="Transcription-repair-coupling factor"/>
    <property type="match status" value="1"/>
</dbReference>
<dbReference type="FunFam" id="3.90.1150.50:FF:000003">
    <property type="entry name" value="Transcription-repair-coupling factor"/>
    <property type="match status" value="1"/>
</dbReference>
<dbReference type="Gene3D" id="2.40.10.170">
    <property type="match status" value="1"/>
</dbReference>
<dbReference type="Gene3D" id="3.40.50.11180">
    <property type="match status" value="1"/>
</dbReference>
<dbReference type="Gene3D" id="3.40.50.300">
    <property type="entry name" value="P-loop containing nucleotide triphosphate hydrolases"/>
    <property type="match status" value="2"/>
</dbReference>
<dbReference type="Gene3D" id="3.30.2060.10">
    <property type="entry name" value="Penicillin-binding protein 1b domain"/>
    <property type="match status" value="1"/>
</dbReference>
<dbReference type="Gene3D" id="3.90.1150.50">
    <property type="entry name" value="Transcription-repair-coupling factor, D7 domain"/>
    <property type="match status" value="1"/>
</dbReference>
<dbReference type="HAMAP" id="MF_00969">
    <property type="entry name" value="TRCF"/>
    <property type="match status" value="1"/>
</dbReference>
<dbReference type="InterPro" id="IPR003711">
    <property type="entry name" value="CarD-like/TRCF_RID"/>
</dbReference>
<dbReference type="InterPro" id="IPR036101">
    <property type="entry name" value="CarD-like/TRCF_RID_sf"/>
</dbReference>
<dbReference type="InterPro" id="IPR011545">
    <property type="entry name" value="DEAD/DEAH_box_helicase_dom"/>
</dbReference>
<dbReference type="InterPro" id="IPR014001">
    <property type="entry name" value="Helicase_ATP-bd"/>
</dbReference>
<dbReference type="InterPro" id="IPR001650">
    <property type="entry name" value="Helicase_C-like"/>
</dbReference>
<dbReference type="InterPro" id="IPR004576">
    <property type="entry name" value="Mfd"/>
</dbReference>
<dbReference type="InterPro" id="IPR027417">
    <property type="entry name" value="P-loop_NTPase"/>
</dbReference>
<dbReference type="InterPro" id="IPR047112">
    <property type="entry name" value="RecG/Mfd"/>
</dbReference>
<dbReference type="InterPro" id="IPR037235">
    <property type="entry name" value="TRCF-like_C_D7"/>
</dbReference>
<dbReference type="InterPro" id="IPR005118">
    <property type="entry name" value="TRCF_C"/>
</dbReference>
<dbReference type="InterPro" id="IPR041471">
    <property type="entry name" value="UvrB_inter"/>
</dbReference>
<dbReference type="NCBIfam" id="TIGR00580">
    <property type="entry name" value="mfd"/>
    <property type="match status" value="1"/>
</dbReference>
<dbReference type="PANTHER" id="PTHR47964">
    <property type="entry name" value="ATP-DEPENDENT DNA HELICASE HOMOLOG RECG, CHLOROPLASTIC"/>
    <property type="match status" value="1"/>
</dbReference>
<dbReference type="PANTHER" id="PTHR47964:SF1">
    <property type="entry name" value="ATP-DEPENDENT DNA HELICASE HOMOLOG RECG, CHLOROPLASTIC"/>
    <property type="match status" value="1"/>
</dbReference>
<dbReference type="Pfam" id="PF02559">
    <property type="entry name" value="CarD_TRCF_RID"/>
    <property type="match status" value="1"/>
</dbReference>
<dbReference type="Pfam" id="PF00270">
    <property type="entry name" value="DEAD"/>
    <property type="match status" value="1"/>
</dbReference>
<dbReference type="Pfam" id="PF00271">
    <property type="entry name" value="Helicase_C"/>
    <property type="match status" value="1"/>
</dbReference>
<dbReference type="Pfam" id="PF03461">
    <property type="entry name" value="TRCF"/>
    <property type="match status" value="1"/>
</dbReference>
<dbReference type="Pfam" id="PF17757">
    <property type="entry name" value="UvrB_inter"/>
    <property type="match status" value="1"/>
</dbReference>
<dbReference type="SMART" id="SM01058">
    <property type="entry name" value="CarD_TRCF"/>
    <property type="match status" value="1"/>
</dbReference>
<dbReference type="SMART" id="SM00487">
    <property type="entry name" value="DEXDc"/>
    <property type="match status" value="1"/>
</dbReference>
<dbReference type="SMART" id="SM00490">
    <property type="entry name" value="HELICc"/>
    <property type="match status" value="1"/>
</dbReference>
<dbReference type="SMART" id="SM00982">
    <property type="entry name" value="TRCF"/>
    <property type="match status" value="1"/>
</dbReference>
<dbReference type="SUPFAM" id="SSF141259">
    <property type="entry name" value="CarD-like"/>
    <property type="match status" value="1"/>
</dbReference>
<dbReference type="SUPFAM" id="SSF52540">
    <property type="entry name" value="P-loop containing nucleoside triphosphate hydrolases"/>
    <property type="match status" value="4"/>
</dbReference>
<dbReference type="SUPFAM" id="SSF143517">
    <property type="entry name" value="TRCF domain-like"/>
    <property type="match status" value="1"/>
</dbReference>
<dbReference type="PROSITE" id="PS51192">
    <property type="entry name" value="HELICASE_ATP_BIND_1"/>
    <property type="match status" value="1"/>
</dbReference>
<dbReference type="PROSITE" id="PS51194">
    <property type="entry name" value="HELICASE_CTER"/>
    <property type="match status" value="1"/>
</dbReference>
<evidence type="ECO:0000255" key="1">
    <source>
        <dbReference type="HAMAP-Rule" id="MF_00969"/>
    </source>
</evidence>
<evidence type="ECO:0000256" key="2">
    <source>
        <dbReference type="SAM" id="MobiDB-lite"/>
    </source>
</evidence>
<keyword id="KW-0067">ATP-binding</keyword>
<keyword id="KW-0963">Cytoplasm</keyword>
<keyword id="KW-0227">DNA damage</keyword>
<keyword id="KW-0234">DNA repair</keyword>
<keyword id="KW-0238">DNA-binding</keyword>
<keyword id="KW-0347">Helicase</keyword>
<keyword id="KW-0378">Hydrolase</keyword>
<keyword id="KW-0547">Nucleotide-binding</keyword>
<keyword id="KW-1185">Reference proteome</keyword>
<reference key="1">
    <citation type="journal article" date="2003" name="Proc. Natl. Acad. Sci. U.S.A.">
        <title>The complete genome sequence of Mycobacterium bovis.</title>
        <authorList>
            <person name="Garnier T."/>
            <person name="Eiglmeier K."/>
            <person name="Camus J.-C."/>
            <person name="Medina N."/>
            <person name="Mansoor H."/>
            <person name="Pryor M."/>
            <person name="Duthoy S."/>
            <person name="Grondin S."/>
            <person name="Lacroix C."/>
            <person name="Monsempe C."/>
            <person name="Simon S."/>
            <person name="Harris B."/>
            <person name="Atkin R."/>
            <person name="Doggett J."/>
            <person name="Mayes R."/>
            <person name="Keating L."/>
            <person name="Wheeler P.R."/>
            <person name="Parkhill J."/>
            <person name="Barrell B.G."/>
            <person name="Cole S.T."/>
            <person name="Gordon S.V."/>
            <person name="Hewinson R.G."/>
        </authorList>
    </citation>
    <scope>NUCLEOTIDE SEQUENCE [LARGE SCALE GENOMIC DNA]</scope>
    <source>
        <strain>ATCC BAA-935 / AF2122/97</strain>
    </source>
</reference>
<reference key="2">
    <citation type="journal article" date="2017" name="Genome Announc.">
        <title>Updated reference genome sequence and annotation of Mycobacterium bovis AF2122/97.</title>
        <authorList>
            <person name="Malone K.M."/>
            <person name="Farrell D."/>
            <person name="Stuber T.P."/>
            <person name="Schubert O.T."/>
            <person name="Aebersold R."/>
            <person name="Robbe-Austerman S."/>
            <person name="Gordon S.V."/>
        </authorList>
    </citation>
    <scope>NUCLEOTIDE SEQUENCE [LARGE SCALE GENOMIC DNA]</scope>
    <scope>GENOME REANNOTATION</scope>
    <source>
        <strain>ATCC BAA-935 / AF2122/97</strain>
    </source>
</reference>
<organism>
    <name type="scientific">Mycobacterium bovis (strain ATCC BAA-935 / AF2122/97)</name>
    <dbReference type="NCBI Taxonomy" id="233413"/>
    <lineage>
        <taxon>Bacteria</taxon>
        <taxon>Bacillati</taxon>
        <taxon>Actinomycetota</taxon>
        <taxon>Actinomycetes</taxon>
        <taxon>Mycobacteriales</taxon>
        <taxon>Mycobacteriaceae</taxon>
        <taxon>Mycobacterium</taxon>
        <taxon>Mycobacterium tuberculosis complex</taxon>
    </lineage>
</organism>
<sequence>MTAPGPACSDTPIAGLVELALSAPTFQQLMQRAGGRPDELTLIAPASARLLVASALARQGPLLVVTATGREADDLAAELRGVFGDAVALLPSWETLPHERLSPGVDTVGTRLMALRRLAHPDDAQLGPPLGVVVTSVRSLLQPMTPQLGMMEPLTLTVGDESPFDGVVARLVELAYTRVDMVGRRGEFAVRGGILDIFAPTAEHPVRVEFWGDEITEMRMFSVADQRSIPEIDIHTLVAFACRELLLSEDVRARAAQLAARHPAAESTVTGSASDMLAKLAEGIAVDGMEAVLPVLWSDGHALLTDQLPDGTPVLVCDPEKVRTRAADLIRTGREFLEASWSVAALGTAENQAPVDVEQLGGSGFVELDQVRAAAARTGHPWWTLSQLSDESAIELDVRAAPSARGHQRDIDEIFAMLRAHIATGGYAALVAPGTGTAHRVVERLSESDTPAGMLDPGQAPKPGVVGVLQGPLRDGVIIPGANLVVITETDLTGSRVSAAEGKRLAAKRRNIVDPLALTAGDLVVHDQHGIGRFVEMVERTVGGARREYLVLEYASAKRGGGAKNTDKLYVPMDSLDQLSRYVGGQAPALSRLGGSDWANTKTKARRAVREIAGELVSLYAKRQASPGHAFSPDTPWQAELEDAFGFTETVDQLTAIEEVKADMEKPIPMDRVICGDVGYGKTEIAVRAAFKAVQDGKQVAVLVPTTLLADQHLQTFGERMSGFPVTIKGLSRFTDAAESRAVIDGLADGSVDIVIGTHRLLQTGVRWKDLGLVVVDEEQRFGVEHKEHIKSLRTHVDVLTMSATPIPRTLEMSLAGIREMSTILTPPEERYPVLTYVGPHDDKQIAAALRRELLRDGQAFYVHNRVSSIDAAAARVRELVPEARVVVAHGQMPEDLLETTVQRFWNREHDILVCTTIVETGLDISNANTLIVERADTFGLSQLHQLRGRVGRSRERGYAYFLYPPQVPLTETAYDRLATIAQNNELGAGMAVALKDLEIRGAGNVLGIEQSGHVAGVGFDLYVRLVGEALETYRDAYRAAADGQTVRTAEEPKDVRIDLPVDAHLPPDYIASDRLRLEGYRRLAAASSDREVAAVVDELTDRYGALPEPARRLAAVARLRLLCRGSGITDVTAASAATVRLSPLTLPDSAQVRLKRMYPGAHYRATTATVQVPIPRAGGLGAPRIRDVELVQMVADLITALAGKPRQHIGITNPSPPGEDGRGRNTTIKERQP</sequence>